<organism>
    <name type="scientific">Xenopus tropicalis</name>
    <name type="common">Western clawed frog</name>
    <name type="synonym">Silurana tropicalis</name>
    <dbReference type="NCBI Taxonomy" id="8364"/>
    <lineage>
        <taxon>Eukaryota</taxon>
        <taxon>Metazoa</taxon>
        <taxon>Chordata</taxon>
        <taxon>Craniata</taxon>
        <taxon>Vertebrata</taxon>
        <taxon>Euteleostomi</taxon>
        <taxon>Amphibia</taxon>
        <taxon>Batrachia</taxon>
        <taxon>Anura</taxon>
        <taxon>Pipoidea</taxon>
        <taxon>Pipidae</taxon>
        <taxon>Xenopodinae</taxon>
        <taxon>Xenopus</taxon>
        <taxon>Silurana</taxon>
    </lineage>
</organism>
<sequence length="514" mass="58540">MSAEGEPAEAVAETPANSPGEEAAAAAATTDVDVREEQRPEKQSLSASMCRESHWKCLLLSILMFVCLGAVTWCQVTSVTKLSFDSSLKGRSMIYHGSPCSDGYVYIPLAFLAMLYVVYLVECWHCHAKSELQNKADISSVHDQIQRMRQATPCIWWKAISYHFVRRTRQVTRYRHGDAYTTTQVYHERVNTHVAEAEFEYSHCGIKDISKDLLDLERHPATKLKFTKCFSFANVESENSYLTQRARFFTEIEGLDDYMEAREGMQLKNVDFKELVVAYVDLEKQPWYVSHYAFWVAALFMLSWPLRVFIEYRTAHVHYHIEKLLGLEYTASSTGDEPIYRFRMPRVSTLDSTELEWHICTNRQLIPSYSEAVLMDLTDASLCNGYSSCGYRGVLQACEGCNRASSSSSIFSRHAIHSCSGGPSHLSLSTSRFSLCQLHGSHRTGLWRSRSSSLADRGCQDERCCSYSSQLALNENPPTYHDARFFPVLIVHRQEGCQTRNFCLHRSSCMETSL</sequence>
<accession>A3KN95</accession>
<keyword id="KW-0472">Membrane</keyword>
<keyword id="KW-1185">Reference proteome</keyword>
<keyword id="KW-0812">Transmembrane</keyword>
<keyword id="KW-1133">Transmembrane helix</keyword>
<feature type="chain" id="PRO_0000307223" description="Transmembrane protein 151B">
    <location>
        <begin position="1"/>
        <end position="514"/>
    </location>
</feature>
<feature type="transmembrane region" description="Helical" evidence="1">
    <location>
        <begin position="57"/>
        <end position="77"/>
    </location>
</feature>
<feature type="transmembrane region" description="Helical" evidence="1">
    <location>
        <begin position="104"/>
        <end position="124"/>
    </location>
</feature>
<feature type="transmembrane region" description="Helical" evidence="1">
    <location>
        <begin position="286"/>
        <end position="306"/>
    </location>
</feature>
<feature type="region of interest" description="Disordered" evidence="2">
    <location>
        <begin position="1"/>
        <end position="40"/>
    </location>
</feature>
<gene>
    <name type="primary">tmem151b</name>
</gene>
<name>T151B_XENTR</name>
<evidence type="ECO:0000255" key="1"/>
<evidence type="ECO:0000256" key="2">
    <source>
        <dbReference type="SAM" id="MobiDB-lite"/>
    </source>
</evidence>
<evidence type="ECO:0000305" key="3"/>
<comment type="subcellular location">
    <subcellularLocation>
        <location evidence="3">Membrane</location>
        <topology evidence="3">Multi-pass membrane protein</topology>
    </subcellularLocation>
</comment>
<comment type="similarity">
    <text evidence="3">Belongs to the TMEM151 family.</text>
</comment>
<proteinExistence type="evidence at transcript level"/>
<protein>
    <recommendedName>
        <fullName>Transmembrane protein 151B</fullName>
    </recommendedName>
</protein>
<reference key="1">
    <citation type="submission" date="2007-03" db="EMBL/GenBank/DDBJ databases">
        <authorList>
            <consortium name="NIH - Xenopus Gene Collection (XGC) project"/>
        </authorList>
    </citation>
    <scope>NUCLEOTIDE SEQUENCE [LARGE SCALE MRNA]</scope>
    <source>
        <tissue>Brain</tissue>
    </source>
</reference>
<dbReference type="EMBL" id="BC133721">
    <property type="protein sequence ID" value="AAI33722.1"/>
    <property type="molecule type" value="mRNA"/>
</dbReference>
<dbReference type="RefSeq" id="NP_001090768.1">
    <property type="nucleotide sequence ID" value="NM_001097299.1"/>
</dbReference>
<dbReference type="PaxDb" id="8364-ENSXETP00000000087"/>
<dbReference type="GeneID" id="100037854"/>
<dbReference type="KEGG" id="xtr:100037854"/>
<dbReference type="AGR" id="Xenbase:XB-GENE-5750851"/>
<dbReference type="Xenbase" id="XB-GENE-5750851">
    <property type="gene designation" value="tmem151b"/>
</dbReference>
<dbReference type="eggNOG" id="ENOG502QSYQ">
    <property type="taxonomic scope" value="Eukaryota"/>
</dbReference>
<dbReference type="InParanoid" id="A3KN95"/>
<dbReference type="OMA" id="CQLHGSH"/>
<dbReference type="OrthoDB" id="190434at2759"/>
<dbReference type="Proteomes" id="UP000008143">
    <property type="component" value="Chromosome 8"/>
</dbReference>
<dbReference type="GO" id="GO:0016020">
    <property type="term" value="C:membrane"/>
    <property type="evidence" value="ECO:0007669"/>
    <property type="project" value="UniProtKB-SubCell"/>
</dbReference>
<dbReference type="InterPro" id="IPR026767">
    <property type="entry name" value="Tmem151"/>
</dbReference>
<dbReference type="PANTHER" id="PTHR31893">
    <property type="entry name" value="TRANSMEMBRANE PROTEIN 151 HOMOLOG"/>
    <property type="match status" value="1"/>
</dbReference>
<dbReference type="PANTHER" id="PTHR31893:SF2">
    <property type="entry name" value="TRANSMEMBRANE PROTEIN 151B"/>
    <property type="match status" value="1"/>
</dbReference>
<dbReference type="Pfam" id="PF14857">
    <property type="entry name" value="TMEM151"/>
    <property type="match status" value="1"/>
</dbReference>